<feature type="chain" id="PRO_0000225504" description="DNA-directed RNA polymerase subunit beta'">
    <location>
        <begin position="1"/>
        <end position="1397"/>
    </location>
</feature>
<feature type="binding site" evidence="1">
    <location>
        <position position="75"/>
    </location>
    <ligand>
        <name>Zn(2+)</name>
        <dbReference type="ChEBI" id="CHEBI:29105"/>
        <label>1</label>
    </ligand>
</feature>
<feature type="binding site" evidence="1">
    <location>
        <position position="77"/>
    </location>
    <ligand>
        <name>Zn(2+)</name>
        <dbReference type="ChEBI" id="CHEBI:29105"/>
        <label>1</label>
    </ligand>
</feature>
<feature type="binding site" evidence="1">
    <location>
        <position position="90"/>
    </location>
    <ligand>
        <name>Zn(2+)</name>
        <dbReference type="ChEBI" id="CHEBI:29105"/>
        <label>1</label>
    </ligand>
</feature>
<feature type="binding site" evidence="1">
    <location>
        <position position="93"/>
    </location>
    <ligand>
        <name>Zn(2+)</name>
        <dbReference type="ChEBI" id="CHEBI:29105"/>
        <label>1</label>
    </ligand>
</feature>
<feature type="binding site" evidence="1">
    <location>
        <position position="465"/>
    </location>
    <ligand>
        <name>Mg(2+)</name>
        <dbReference type="ChEBI" id="CHEBI:18420"/>
    </ligand>
</feature>
<feature type="binding site" evidence="1">
    <location>
        <position position="467"/>
    </location>
    <ligand>
        <name>Mg(2+)</name>
        <dbReference type="ChEBI" id="CHEBI:18420"/>
    </ligand>
</feature>
<feature type="binding site" evidence="1">
    <location>
        <position position="469"/>
    </location>
    <ligand>
        <name>Mg(2+)</name>
        <dbReference type="ChEBI" id="CHEBI:18420"/>
    </ligand>
</feature>
<feature type="binding site" evidence="1">
    <location>
        <position position="819"/>
    </location>
    <ligand>
        <name>Zn(2+)</name>
        <dbReference type="ChEBI" id="CHEBI:29105"/>
        <label>2</label>
    </ligand>
</feature>
<feature type="binding site" evidence="1">
    <location>
        <position position="893"/>
    </location>
    <ligand>
        <name>Zn(2+)</name>
        <dbReference type="ChEBI" id="CHEBI:29105"/>
        <label>2</label>
    </ligand>
</feature>
<feature type="binding site" evidence="1">
    <location>
        <position position="900"/>
    </location>
    <ligand>
        <name>Zn(2+)</name>
        <dbReference type="ChEBI" id="CHEBI:29105"/>
        <label>2</label>
    </ligand>
</feature>
<feature type="binding site" evidence="1">
    <location>
        <position position="903"/>
    </location>
    <ligand>
        <name>Zn(2+)</name>
        <dbReference type="ChEBI" id="CHEBI:29105"/>
        <label>2</label>
    </ligand>
</feature>
<dbReference type="EC" id="2.7.7.6" evidence="1"/>
<dbReference type="EMBL" id="CR543861">
    <property type="protein sequence ID" value="CAG67268.1"/>
    <property type="status" value="ALT_INIT"/>
    <property type="molecule type" value="Genomic_DNA"/>
</dbReference>
<dbReference type="RefSeq" id="WP_026056991.1">
    <property type="nucleotide sequence ID" value="NC_005966.1"/>
</dbReference>
<dbReference type="SMR" id="Q6FF89"/>
<dbReference type="STRING" id="202950.GCA_001485005_00582"/>
<dbReference type="GeneID" id="45232822"/>
<dbReference type="KEGG" id="aci:ACIAD0308"/>
<dbReference type="eggNOG" id="COG0086">
    <property type="taxonomic scope" value="Bacteria"/>
</dbReference>
<dbReference type="HOGENOM" id="CLU_000524_3_1_6"/>
<dbReference type="OrthoDB" id="9815296at2"/>
<dbReference type="BioCyc" id="ASP62977:ACIAD_RS01465-MONOMER"/>
<dbReference type="Proteomes" id="UP000000430">
    <property type="component" value="Chromosome"/>
</dbReference>
<dbReference type="GO" id="GO:0000428">
    <property type="term" value="C:DNA-directed RNA polymerase complex"/>
    <property type="evidence" value="ECO:0007669"/>
    <property type="project" value="UniProtKB-KW"/>
</dbReference>
<dbReference type="GO" id="GO:0003677">
    <property type="term" value="F:DNA binding"/>
    <property type="evidence" value="ECO:0007669"/>
    <property type="project" value="UniProtKB-UniRule"/>
</dbReference>
<dbReference type="GO" id="GO:0003899">
    <property type="term" value="F:DNA-directed RNA polymerase activity"/>
    <property type="evidence" value="ECO:0007669"/>
    <property type="project" value="UniProtKB-UniRule"/>
</dbReference>
<dbReference type="GO" id="GO:0000287">
    <property type="term" value="F:magnesium ion binding"/>
    <property type="evidence" value="ECO:0007669"/>
    <property type="project" value="UniProtKB-UniRule"/>
</dbReference>
<dbReference type="GO" id="GO:0008270">
    <property type="term" value="F:zinc ion binding"/>
    <property type="evidence" value="ECO:0007669"/>
    <property type="project" value="UniProtKB-UniRule"/>
</dbReference>
<dbReference type="GO" id="GO:0006351">
    <property type="term" value="P:DNA-templated transcription"/>
    <property type="evidence" value="ECO:0007669"/>
    <property type="project" value="UniProtKB-UniRule"/>
</dbReference>
<dbReference type="CDD" id="cd02655">
    <property type="entry name" value="RNAP_beta'_C"/>
    <property type="match status" value="1"/>
</dbReference>
<dbReference type="CDD" id="cd01609">
    <property type="entry name" value="RNAP_beta'_N"/>
    <property type="match status" value="1"/>
</dbReference>
<dbReference type="FunFam" id="1.10.132.30:FF:000003">
    <property type="entry name" value="DNA-directed RNA polymerase subunit beta"/>
    <property type="match status" value="1"/>
</dbReference>
<dbReference type="FunFam" id="1.10.150.390:FF:000002">
    <property type="entry name" value="DNA-directed RNA polymerase subunit beta"/>
    <property type="match status" value="1"/>
</dbReference>
<dbReference type="FunFam" id="4.10.860.120:FF:000001">
    <property type="entry name" value="DNA-directed RNA polymerase subunit beta"/>
    <property type="match status" value="1"/>
</dbReference>
<dbReference type="Gene3D" id="1.10.132.30">
    <property type="match status" value="1"/>
</dbReference>
<dbReference type="Gene3D" id="1.10.150.390">
    <property type="match status" value="1"/>
</dbReference>
<dbReference type="Gene3D" id="1.10.1790.20">
    <property type="match status" value="1"/>
</dbReference>
<dbReference type="Gene3D" id="1.10.40.90">
    <property type="match status" value="1"/>
</dbReference>
<dbReference type="Gene3D" id="2.40.40.20">
    <property type="match status" value="1"/>
</dbReference>
<dbReference type="Gene3D" id="2.40.50.100">
    <property type="match status" value="3"/>
</dbReference>
<dbReference type="Gene3D" id="4.10.860.120">
    <property type="entry name" value="RNA polymerase II, clamp domain"/>
    <property type="match status" value="1"/>
</dbReference>
<dbReference type="Gene3D" id="1.10.274.100">
    <property type="entry name" value="RNA polymerase Rpb1, domain 3"/>
    <property type="match status" value="1"/>
</dbReference>
<dbReference type="HAMAP" id="MF_01322">
    <property type="entry name" value="RNApol_bact_RpoC"/>
    <property type="match status" value="1"/>
</dbReference>
<dbReference type="InterPro" id="IPR045867">
    <property type="entry name" value="DNA-dir_RpoC_beta_prime"/>
</dbReference>
<dbReference type="InterPro" id="IPR012754">
    <property type="entry name" value="DNA-dir_RpoC_beta_prime_bact"/>
</dbReference>
<dbReference type="InterPro" id="IPR000722">
    <property type="entry name" value="RNA_pol_asu"/>
</dbReference>
<dbReference type="InterPro" id="IPR006592">
    <property type="entry name" value="RNA_pol_N"/>
</dbReference>
<dbReference type="InterPro" id="IPR007080">
    <property type="entry name" value="RNA_pol_Rpb1_1"/>
</dbReference>
<dbReference type="InterPro" id="IPR007066">
    <property type="entry name" value="RNA_pol_Rpb1_3"/>
</dbReference>
<dbReference type="InterPro" id="IPR042102">
    <property type="entry name" value="RNA_pol_Rpb1_3_sf"/>
</dbReference>
<dbReference type="InterPro" id="IPR007083">
    <property type="entry name" value="RNA_pol_Rpb1_4"/>
</dbReference>
<dbReference type="InterPro" id="IPR007081">
    <property type="entry name" value="RNA_pol_Rpb1_5"/>
</dbReference>
<dbReference type="InterPro" id="IPR044893">
    <property type="entry name" value="RNA_pol_Rpb1_clamp_domain"/>
</dbReference>
<dbReference type="InterPro" id="IPR038120">
    <property type="entry name" value="Rpb1_funnel_sf"/>
</dbReference>
<dbReference type="NCBIfam" id="TIGR02386">
    <property type="entry name" value="rpoC_TIGR"/>
    <property type="match status" value="1"/>
</dbReference>
<dbReference type="PANTHER" id="PTHR19376">
    <property type="entry name" value="DNA-DIRECTED RNA POLYMERASE"/>
    <property type="match status" value="1"/>
</dbReference>
<dbReference type="PANTHER" id="PTHR19376:SF54">
    <property type="entry name" value="DNA-DIRECTED RNA POLYMERASE SUBUNIT BETA"/>
    <property type="match status" value="1"/>
</dbReference>
<dbReference type="Pfam" id="PF04997">
    <property type="entry name" value="RNA_pol_Rpb1_1"/>
    <property type="match status" value="1"/>
</dbReference>
<dbReference type="Pfam" id="PF00623">
    <property type="entry name" value="RNA_pol_Rpb1_2"/>
    <property type="match status" value="2"/>
</dbReference>
<dbReference type="Pfam" id="PF04983">
    <property type="entry name" value="RNA_pol_Rpb1_3"/>
    <property type="match status" value="1"/>
</dbReference>
<dbReference type="Pfam" id="PF05000">
    <property type="entry name" value="RNA_pol_Rpb1_4"/>
    <property type="match status" value="1"/>
</dbReference>
<dbReference type="Pfam" id="PF04998">
    <property type="entry name" value="RNA_pol_Rpb1_5"/>
    <property type="match status" value="1"/>
</dbReference>
<dbReference type="SMART" id="SM00663">
    <property type="entry name" value="RPOLA_N"/>
    <property type="match status" value="1"/>
</dbReference>
<dbReference type="SUPFAM" id="SSF64484">
    <property type="entry name" value="beta and beta-prime subunits of DNA dependent RNA-polymerase"/>
    <property type="match status" value="1"/>
</dbReference>
<protein>
    <recommendedName>
        <fullName evidence="1">DNA-directed RNA polymerase subunit beta'</fullName>
        <shortName evidence="1">RNAP subunit beta'</shortName>
        <ecNumber evidence="1">2.7.7.6</ecNumber>
    </recommendedName>
    <alternativeName>
        <fullName evidence="1">RNA polymerase subunit beta'</fullName>
    </alternativeName>
    <alternativeName>
        <fullName evidence="1">Transcriptase subunit beta'</fullName>
    </alternativeName>
</protein>
<organism>
    <name type="scientific">Acinetobacter baylyi (strain ATCC 33305 / BD413 / ADP1)</name>
    <dbReference type="NCBI Taxonomy" id="62977"/>
    <lineage>
        <taxon>Bacteria</taxon>
        <taxon>Pseudomonadati</taxon>
        <taxon>Pseudomonadota</taxon>
        <taxon>Gammaproteobacteria</taxon>
        <taxon>Moraxellales</taxon>
        <taxon>Moraxellaceae</taxon>
        <taxon>Acinetobacter</taxon>
    </lineage>
</organism>
<name>RPOC_ACIAD</name>
<proteinExistence type="inferred from homology"/>
<gene>
    <name evidence="1" type="primary">rpoC</name>
    <name type="ordered locus">ACIAD0308</name>
</gene>
<accession>Q6FF89</accession>
<comment type="function">
    <text evidence="1">DNA-dependent RNA polymerase catalyzes the transcription of DNA into RNA using the four ribonucleoside triphosphates as substrates.</text>
</comment>
<comment type="catalytic activity">
    <reaction evidence="1">
        <text>RNA(n) + a ribonucleoside 5'-triphosphate = RNA(n+1) + diphosphate</text>
        <dbReference type="Rhea" id="RHEA:21248"/>
        <dbReference type="Rhea" id="RHEA-COMP:14527"/>
        <dbReference type="Rhea" id="RHEA-COMP:17342"/>
        <dbReference type="ChEBI" id="CHEBI:33019"/>
        <dbReference type="ChEBI" id="CHEBI:61557"/>
        <dbReference type="ChEBI" id="CHEBI:140395"/>
        <dbReference type="EC" id="2.7.7.6"/>
    </reaction>
</comment>
<comment type="cofactor">
    <cofactor evidence="1">
        <name>Mg(2+)</name>
        <dbReference type="ChEBI" id="CHEBI:18420"/>
    </cofactor>
    <text evidence="1">Binds 1 Mg(2+) ion per subunit.</text>
</comment>
<comment type="cofactor">
    <cofactor evidence="1">
        <name>Zn(2+)</name>
        <dbReference type="ChEBI" id="CHEBI:29105"/>
    </cofactor>
    <text evidence="1">Binds 2 Zn(2+) ions per subunit.</text>
</comment>
<comment type="subunit">
    <text evidence="1">The RNAP catalytic core consists of 2 alpha, 1 beta, 1 beta' and 1 omega subunit. When a sigma factor is associated with the core the holoenzyme is formed, which can initiate transcription.</text>
</comment>
<comment type="similarity">
    <text evidence="1">Belongs to the RNA polymerase beta' chain family.</text>
</comment>
<comment type="sequence caution" evidence="2">
    <conflict type="erroneous initiation">
        <sequence resource="EMBL-CDS" id="CAG67268"/>
    </conflict>
    <text>Extended N-terminus.</text>
</comment>
<sequence>MKDLLDIMRKKTDSDGHTPIEFDRIRIGLASPEMIKSWSHGEVKKPETINYRTFKPERDGLFCAKIFGPVKDYECLCGKYKRMKYKGVICEKCGVEVTTAKVRRERMGHIELASPVAHIWFLKSLPSRIGLLLDMTLRDIERVLYFESYVVTDPGMTPLEKYQLLTDEEYFNALEEHGDEFSAKMGAEAVQDLLKDIDLEAEISRLREEIPQTTSETKLKKASKRLKLMEAFKESNNKPEWMVMNVLPVLPPDLRPLVPLEGGRFATSDLNDLYRRVINRNNRLKRLLDLAAPDIIVRNEKRMLQESVDALLDNGRRGRAITGSNKRPLKSLADMIKGKQGRFRQNLLGKRVDYSGRSVITVGPTLRLHQCGLPKKMALELFKPFIFAKLQASGQATTIKAAKKMVERETPEVWDVLANVIRQHPVMLNRAPTLHRLGLQAFEPILIEGKAIRLHPLVCAAFNADFDGDQMAVHVPLTLEAQLEARALMMSTNNILSPANGEPIIVPSQDVVLGLYYITRDAVNAKGEGMMFADTHEVNRALATGQVAIHARVKVRVHQTVINEDGQREKQTIVVDTTPGRCLLWEVVPEGLSFEMINLEMTKKNISKLINSCYRKLGLKDTVIFADQLMYLGFRQATRSGVSVGMEDMVIPPQKQAIIDKAETEVREIEEQFEQGFVTAGERYNKVVDIWARTNDQVAKAMMDNLSFTNVKNKQGQDEKQKSFNSIYMMSDSGARGSAAQIRQLAGMRGLMAKPDGSIIETPIKANFREGLTVLQYFISTHGARKGLADTALKTANSGYLTRRLVDVAQDLVITEPDCGTMGGLVMTPFIQGGDVIEPLRDRVLGRVTAEDVRRASDNEIVLPRGTLIDEKIAAQLEEAGVDEVKVRSVIACESTFGVCAKCYGRDLARGHQVNPGESVGVMAAQSIGEPGTQLTMRTFHVGGAASRTSAANSVQVRNKGTVRFHNVKTVQHAKGHLVSVSRSGEIGIADELGRERERYKLPYGASILIKDGEAVEAGGIVATWDPHTHPLVTEVAGKARFSQIADGVTATSKTDDATGMTTVEILPVTARPASGKDLRPAIVLDTTDGGEQFYFLPQNTIVTVRDGETIGVGDVLGRVPQETSRTRDITGGLPRVADLFEARKPKEHAILAEVSGIVSFGKETKGKNRLVITPDDGSEIYEELIPKWRTINVFEGEHVNRGETISDGPQNPHDILRLKGEVALTNYIVNEVQDVYRLQGVKINDKHIEVIVRQMLRKVDITDGGDTSFIKGEQVDYIRVVQENQAVLAQNKFPAKFERQLMGITKASLSTDSFISAASFQETTRVLTEAAVTGKEDDLRGLKENVVVGRLIPAGTGLAYHLERRRQEAEAAEFELHNDFSEVDQAFSQALNQEQF</sequence>
<reference key="1">
    <citation type="journal article" date="2004" name="Nucleic Acids Res.">
        <title>Unique features revealed by the genome sequence of Acinetobacter sp. ADP1, a versatile and naturally transformation competent bacterium.</title>
        <authorList>
            <person name="Barbe V."/>
            <person name="Vallenet D."/>
            <person name="Fonknechten N."/>
            <person name="Kreimeyer A."/>
            <person name="Oztas S."/>
            <person name="Labarre L."/>
            <person name="Cruveiller S."/>
            <person name="Robert C."/>
            <person name="Duprat S."/>
            <person name="Wincker P."/>
            <person name="Ornston L.N."/>
            <person name="Weissenbach J."/>
            <person name="Marliere P."/>
            <person name="Cohen G.N."/>
            <person name="Medigue C."/>
        </authorList>
    </citation>
    <scope>NUCLEOTIDE SEQUENCE [LARGE SCALE GENOMIC DNA]</scope>
    <source>
        <strain>ATCC 33305 / BD413 / ADP1</strain>
    </source>
</reference>
<evidence type="ECO:0000255" key="1">
    <source>
        <dbReference type="HAMAP-Rule" id="MF_01322"/>
    </source>
</evidence>
<evidence type="ECO:0000305" key="2"/>
<keyword id="KW-0240">DNA-directed RNA polymerase</keyword>
<keyword id="KW-0460">Magnesium</keyword>
<keyword id="KW-0479">Metal-binding</keyword>
<keyword id="KW-0548">Nucleotidyltransferase</keyword>
<keyword id="KW-0804">Transcription</keyword>
<keyword id="KW-0808">Transferase</keyword>
<keyword id="KW-0862">Zinc</keyword>